<protein>
    <recommendedName>
        <fullName evidence="1">ATP synthase gamma chain</fullName>
    </recommendedName>
    <alternativeName>
        <fullName evidence="1">ATP synthase F1 sector gamma subunit</fullName>
    </alternativeName>
    <alternativeName>
        <fullName evidence="1">F-ATPase gamma subunit</fullName>
    </alternativeName>
</protein>
<feature type="chain" id="PRO_1000053233" description="ATP synthase gamma chain">
    <location>
        <begin position="1"/>
        <end position="299"/>
    </location>
</feature>
<reference key="1">
    <citation type="journal article" date="2006" name="Proc. Natl. Acad. Sci. U.S.A.">
        <title>Comparative genomics of the lactic acid bacteria.</title>
        <authorList>
            <person name="Makarova K.S."/>
            <person name="Slesarev A."/>
            <person name="Wolf Y.I."/>
            <person name="Sorokin A."/>
            <person name="Mirkin B."/>
            <person name="Koonin E.V."/>
            <person name="Pavlov A."/>
            <person name="Pavlova N."/>
            <person name="Karamychev V."/>
            <person name="Polouchine N."/>
            <person name="Shakhova V."/>
            <person name="Grigoriev I."/>
            <person name="Lou Y."/>
            <person name="Rohksar D."/>
            <person name="Lucas S."/>
            <person name="Huang K."/>
            <person name="Goodstein D.M."/>
            <person name="Hawkins T."/>
            <person name="Plengvidhya V."/>
            <person name="Welker D."/>
            <person name="Hughes J."/>
            <person name="Goh Y."/>
            <person name="Benson A."/>
            <person name="Baldwin K."/>
            <person name="Lee J.-H."/>
            <person name="Diaz-Muniz I."/>
            <person name="Dosti B."/>
            <person name="Smeianov V."/>
            <person name="Wechter W."/>
            <person name="Barabote R."/>
            <person name="Lorca G."/>
            <person name="Altermann E."/>
            <person name="Barrangou R."/>
            <person name="Ganesan B."/>
            <person name="Xie Y."/>
            <person name="Rawsthorne H."/>
            <person name="Tamir D."/>
            <person name="Parker C."/>
            <person name="Breidt F."/>
            <person name="Broadbent J.R."/>
            <person name="Hutkins R."/>
            <person name="O'Sullivan D."/>
            <person name="Steele J."/>
            <person name="Unlu G."/>
            <person name="Saier M.H. Jr."/>
            <person name="Klaenhammer T."/>
            <person name="Richardson P."/>
            <person name="Kozyavkin S."/>
            <person name="Weimer B.C."/>
            <person name="Mills D.A."/>
        </authorList>
    </citation>
    <scope>NUCLEOTIDE SEQUENCE [LARGE SCALE GENOMIC DNA]</scope>
    <source>
        <strain>ATCC 367 / BCRC 12310 / CIP 105137 / JCM 1170 / LMG 11437 / NCIMB 947 / NCTC 947</strain>
    </source>
</reference>
<comment type="function">
    <text evidence="1">Produces ATP from ADP in the presence of a proton gradient across the membrane. The gamma chain is believed to be important in regulating ATPase activity and the flow of protons through the CF(0) complex.</text>
</comment>
<comment type="subunit">
    <text evidence="1">F-type ATPases have 2 components, CF(1) - the catalytic core - and CF(0) - the membrane proton channel. CF(1) has five subunits: alpha(3), beta(3), gamma(1), delta(1), epsilon(1). CF(0) has three main subunits: a, b and c.</text>
</comment>
<comment type="subcellular location">
    <subcellularLocation>
        <location evidence="1">Cell membrane</location>
        <topology evidence="1">Peripheral membrane protein</topology>
    </subcellularLocation>
</comment>
<comment type="similarity">
    <text evidence="1">Belongs to the ATPase gamma chain family.</text>
</comment>
<sequence length="299" mass="33234">MAESIHDVQRRINSTKATRQITSAMHMVSTAKLNKIQKQAVGYQDYVSKVKAVVMHLSQSHLLDNSSSSLQSNRPVKKTAYLVITSDRGMVGSYNSSVLRDTNAFIKERTPNPDDYMVLAVGGTGADFYKHRGVNVAYEYRGVSDVPEFNEVREIVKTVTTMFNNEVFDELFVCYNHFVNRISSRFRAEKMLPVDKETMSTDAAKDTQAAPLTAEYDTEPSEEEVLQVVLPQYAESLVYGAILDAKTAEHASSTNAMQSATDNADDLIATLQLHYNRARQAAITTEITEITGGQEALNN</sequence>
<keyword id="KW-0066">ATP synthesis</keyword>
<keyword id="KW-1003">Cell membrane</keyword>
<keyword id="KW-0139">CF(1)</keyword>
<keyword id="KW-0375">Hydrogen ion transport</keyword>
<keyword id="KW-0406">Ion transport</keyword>
<keyword id="KW-0472">Membrane</keyword>
<keyword id="KW-1185">Reference proteome</keyword>
<keyword id="KW-0813">Transport</keyword>
<proteinExistence type="inferred from homology"/>
<accession>Q03QY7</accession>
<organism>
    <name type="scientific">Levilactobacillus brevis (strain ATCC 367 / BCRC 12310 / CIP 105137 / JCM 1170 / LMG 11437 / NCIMB 947 / NCTC 947)</name>
    <name type="common">Lactobacillus brevis</name>
    <dbReference type="NCBI Taxonomy" id="387344"/>
    <lineage>
        <taxon>Bacteria</taxon>
        <taxon>Bacillati</taxon>
        <taxon>Bacillota</taxon>
        <taxon>Bacilli</taxon>
        <taxon>Lactobacillales</taxon>
        <taxon>Lactobacillaceae</taxon>
        <taxon>Levilactobacillus</taxon>
    </lineage>
</organism>
<name>ATPG_LEVBA</name>
<dbReference type="EMBL" id="CP000416">
    <property type="protein sequence ID" value="ABJ64385.1"/>
    <property type="molecule type" value="Genomic_DNA"/>
</dbReference>
<dbReference type="RefSeq" id="WP_011668149.1">
    <property type="nucleotide sequence ID" value="NC_008497.1"/>
</dbReference>
<dbReference type="SMR" id="Q03QY7"/>
<dbReference type="STRING" id="387344.LVIS_1280"/>
<dbReference type="KEGG" id="lbr:LVIS_1280"/>
<dbReference type="eggNOG" id="COG0224">
    <property type="taxonomic scope" value="Bacteria"/>
</dbReference>
<dbReference type="HOGENOM" id="CLU_050669_0_1_9"/>
<dbReference type="Proteomes" id="UP000001652">
    <property type="component" value="Chromosome"/>
</dbReference>
<dbReference type="GO" id="GO:0005886">
    <property type="term" value="C:plasma membrane"/>
    <property type="evidence" value="ECO:0007669"/>
    <property type="project" value="UniProtKB-SubCell"/>
</dbReference>
<dbReference type="GO" id="GO:0045259">
    <property type="term" value="C:proton-transporting ATP synthase complex"/>
    <property type="evidence" value="ECO:0007669"/>
    <property type="project" value="UniProtKB-KW"/>
</dbReference>
<dbReference type="GO" id="GO:0005524">
    <property type="term" value="F:ATP binding"/>
    <property type="evidence" value="ECO:0007669"/>
    <property type="project" value="UniProtKB-UniRule"/>
</dbReference>
<dbReference type="GO" id="GO:0046933">
    <property type="term" value="F:proton-transporting ATP synthase activity, rotational mechanism"/>
    <property type="evidence" value="ECO:0007669"/>
    <property type="project" value="UniProtKB-UniRule"/>
</dbReference>
<dbReference type="GO" id="GO:0042777">
    <property type="term" value="P:proton motive force-driven plasma membrane ATP synthesis"/>
    <property type="evidence" value="ECO:0007669"/>
    <property type="project" value="UniProtKB-UniRule"/>
</dbReference>
<dbReference type="CDD" id="cd12151">
    <property type="entry name" value="F1-ATPase_gamma"/>
    <property type="match status" value="1"/>
</dbReference>
<dbReference type="Gene3D" id="3.40.1380.10">
    <property type="match status" value="1"/>
</dbReference>
<dbReference type="Gene3D" id="1.10.287.80">
    <property type="entry name" value="ATP synthase, gamma subunit, helix hairpin domain"/>
    <property type="match status" value="1"/>
</dbReference>
<dbReference type="HAMAP" id="MF_00815">
    <property type="entry name" value="ATP_synth_gamma_bact"/>
    <property type="match status" value="1"/>
</dbReference>
<dbReference type="InterPro" id="IPR035968">
    <property type="entry name" value="ATP_synth_F1_ATPase_gsu"/>
</dbReference>
<dbReference type="InterPro" id="IPR000131">
    <property type="entry name" value="ATP_synth_F1_gsu"/>
</dbReference>
<dbReference type="NCBIfam" id="TIGR01146">
    <property type="entry name" value="ATPsyn_F1gamma"/>
    <property type="match status" value="1"/>
</dbReference>
<dbReference type="NCBIfam" id="NF004147">
    <property type="entry name" value="PRK05621.2-1"/>
    <property type="match status" value="1"/>
</dbReference>
<dbReference type="PANTHER" id="PTHR11693">
    <property type="entry name" value="ATP SYNTHASE GAMMA CHAIN"/>
    <property type="match status" value="1"/>
</dbReference>
<dbReference type="PANTHER" id="PTHR11693:SF22">
    <property type="entry name" value="ATP SYNTHASE SUBUNIT GAMMA, MITOCHONDRIAL"/>
    <property type="match status" value="1"/>
</dbReference>
<dbReference type="Pfam" id="PF00231">
    <property type="entry name" value="ATP-synt"/>
    <property type="match status" value="1"/>
</dbReference>
<dbReference type="PRINTS" id="PR00126">
    <property type="entry name" value="ATPASEGAMMA"/>
</dbReference>
<dbReference type="SUPFAM" id="SSF52943">
    <property type="entry name" value="ATP synthase (F1-ATPase), gamma subunit"/>
    <property type="match status" value="1"/>
</dbReference>
<evidence type="ECO:0000255" key="1">
    <source>
        <dbReference type="HAMAP-Rule" id="MF_00815"/>
    </source>
</evidence>
<gene>
    <name evidence="1" type="primary">atpG</name>
    <name type="ordered locus">LVIS_1280</name>
</gene>